<sequence>MNLLNHFLIAMPSLSDPLFQRSVVYVCEHNENGAMGLVINKPIEDISIESVLEQLEIFSADRDSAISLQKPVMSGGPVAEEHGFILHTPVSGFSSSIKISDSTMITTSKDVLETLGTARQPEKTLVSLGYSSWEKGQLEREILENSWLTVEATPQIIFDTPIAERWHKAAELIGIDIHTISPTAGHA</sequence>
<reference key="1">
    <citation type="journal article" date="2008" name="J. Bacteriol.">
        <title>Complete genome sequence of uropathogenic Proteus mirabilis, a master of both adherence and motility.</title>
        <authorList>
            <person name="Pearson M.M."/>
            <person name="Sebaihia M."/>
            <person name="Churcher C."/>
            <person name="Quail M.A."/>
            <person name="Seshasayee A.S."/>
            <person name="Luscombe N.M."/>
            <person name="Abdellah Z."/>
            <person name="Arrosmith C."/>
            <person name="Atkin B."/>
            <person name="Chillingworth T."/>
            <person name="Hauser H."/>
            <person name="Jagels K."/>
            <person name="Moule S."/>
            <person name="Mungall K."/>
            <person name="Norbertczak H."/>
            <person name="Rabbinowitsch E."/>
            <person name="Walker D."/>
            <person name="Whithead S."/>
            <person name="Thomson N.R."/>
            <person name="Rather P.N."/>
            <person name="Parkhill J."/>
            <person name="Mobley H.L.T."/>
        </authorList>
    </citation>
    <scope>NUCLEOTIDE SEQUENCE [LARGE SCALE GENOMIC DNA]</scope>
    <source>
        <strain>HI4320</strain>
    </source>
</reference>
<evidence type="ECO:0000255" key="1">
    <source>
        <dbReference type="HAMAP-Rule" id="MF_00758"/>
    </source>
</evidence>
<name>Y339_PROMH</name>
<accession>B4EUS1</accession>
<comment type="similarity">
    <text evidence="1">Belongs to the UPF0301 (AlgH) family.</text>
</comment>
<gene>
    <name type="ordered locus">PMI0339</name>
</gene>
<protein>
    <recommendedName>
        <fullName evidence="1">UPF0301 protein PMI0339</fullName>
    </recommendedName>
</protein>
<organism>
    <name type="scientific">Proteus mirabilis (strain HI4320)</name>
    <dbReference type="NCBI Taxonomy" id="529507"/>
    <lineage>
        <taxon>Bacteria</taxon>
        <taxon>Pseudomonadati</taxon>
        <taxon>Pseudomonadota</taxon>
        <taxon>Gammaproteobacteria</taxon>
        <taxon>Enterobacterales</taxon>
        <taxon>Morganellaceae</taxon>
        <taxon>Proteus</taxon>
    </lineage>
</organism>
<dbReference type="EMBL" id="AM942759">
    <property type="protein sequence ID" value="CAR40881.1"/>
    <property type="molecule type" value="Genomic_DNA"/>
</dbReference>
<dbReference type="RefSeq" id="WP_004244821.1">
    <property type="nucleotide sequence ID" value="NC_010554.1"/>
</dbReference>
<dbReference type="SMR" id="B4EUS1"/>
<dbReference type="EnsemblBacteria" id="CAR40881">
    <property type="protein sequence ID" value="CAR40881"/>
    <property type="gene ID" value="PMI0339"/>
</dbReference>
<dbReference type="GeneID" id="6800875"/>
<dbReference type="KEGG" id="pmr:PMI0339"/>
<dbReference type="eggNOG" id="COG1678">
    <property type="taxonomic scope" value="Bacteria"/>
</dbReference>
<dbReference type="HOGENOM" id="CLU_057596_1_0_6"/>
<dbReference type="Proteomes" id="UP000008319">
    <property type="component" value="Chromosome"/>
</dbReference>
<dbReference type="GO" id="GO:0005829">
    <property type="term" value="C:cytosol"/>
    <property type="evidence" value="ECO:0007669"/>
    <property type="project" value="TreeGrafter"/>
</dbReference>
<dbReference type="Gene3D" id="3.40.1740.10">
    <property type="entry name" value="VC0467-like"/>
    <property type="match status" value="1"/>
</dbReference>
<dbReference type="Gene3D" id="3.30.70.1300">
    <property type="entry name" value="VC0467-like domains"/>
    <property type="match status" value="1"/>
</dbReference>
<dbReference type="HAMAP" id="MF_00758">
    <property type="entry name" value="UPF0301"/>
    <property type="match status" value="1"/>
</dbReference>
<dbReference type="InterPro" id="IPR003774">
    <property type="entry name" value="AlgH-like"/>
</dbReference>
<dbReference type="NCBIfam" id="NF001266">
    <property type="entry name" value="PRK00228.1-1"/>
    <property type="match status" value="1"/>
</dbReference>
<dbReference type="PANTHER" id="PTHR30327">
    <property type="entry name" value="UNCHARACTERIZED PROTEIN YQGE"/>
    <property type="match status" value="1"/>
</dbReference>
<dbReference type="PANTHER" id="PTHR30327:SF1">
    <property type="entry name" value="UPF0301 PROTEIN YQGE"/>
    <property type="match status" value="1"/>
</dbReference>
<dbReference type="Pfam" id="PF02622">
    <property type="entry name" value="DUF179"/>
    <property type="match status" value="1"/>
</dbReference>
<dbReference type="SUPFAM" id="SSF143456">
    <property type="entry name" value="VC0467-like"/>
    <property type="match status" value="1"/>
</dbReference>
<keyword id="KW-1185">Reference proteome</keyword>
<proteinExistence type="inferred from homology"/>
<feature type="chain" id="PRO_1000198285" description="UPF0301 protein PMI0339">
    <location>
        <begin position="1"/>
        <end position="187"/>
    </location>
</feature>